<protein>
    <recommendedName>
        <fullName>Probable endo-xylogalacturonan hydrolase A</fullName>
        <ecNumber>3.2.1.-</ecNumber>
    </recommendedName>
</protein>
<proteinExistence type="inferred from homology"/>
<keyword id="KW-0119">Carbohydrate metabolism</keyword>
<keyword id="KW-0961">Cell wall biogenesis/degradation</keyword>
<keyword id="KW-0325">Glycoprotein</keyword>
<keyword id="KW-0326">Glycosidase</keyword>
<keyword id="KW-0378">Hydrolase</keyword>
<keyword id="KW-0624">Polysaccharide degradation</keyword>
<keyword id="KW-1185">Reference proteome</keyword>
<keyword id="KW-0677">Repeat</keyword>
<keyword id="KW-0964">Secreted</keyword>
<keyword id="KW-0732">Signal</keyword>
<accession>Q5B7U1</accession>
<accession>C8VHN3</accession>
<gene>
    <name type="primary">xghA</name>
    <name type="ORF">AN3389</name>
</gene>
<name>XGHA_EMENI</name>
<feature type="signal peptide" evidence="2">
    <location>
        <begin position="1"/>
        <end position="19"/>
    </location>
</feature>
<feature type="chain" id="PRO_0000394701" description="Probable endo-xylogalacturonan hydrolase A">
    <location>
        <begin position="20"/>
        <end position="399"/>
    </location>
</feature>
<feature type="repeat" description="PbH1 1">
    <location>
        <begin position="177"/>
        <end position="207"/>
    </location>
</feature>
<feature type="repeat" description="PbH1 2">
    <location>
        <begin position="208"/>
        <end position="229"/>
    </location>
</feature>
<feature type="repeat" description="PbH1 3">
    <location>
        <begin position="231"/>
        <end position="251"/>
    </location>
</feature>
<feature type="repeat" description="PbH1 4">
    <location>
        <begin position="260"/>
        <end position="283"/>
    </location>
</feature>
<feature type="repeat" description="PbH1 5">
    <location>
        <begin position="293"/>
        <end position="314"/>
    </location>
</feature>
<feature type="active site" description="Proton donor" evidence="3">
    <location>
        <position position="222"/>
    </location>
</feature>
<feature type="active site" evidence="3">
    <location>
        <position position="245"/>
    </location>
</feature>
<feature type="glycosylation site" description="N-linked (GlcNAc...) asparagine" evidence="2">
    <location>
        <position position="295"/>
    </location>
</feature>
<feature type="glycosylation site" description="N-linked (GlcNAc...) asparagine" evidence="2">
    <location>
        <position position="382"/>
    </location>
</feature>
<reference key="1">
    <citation type="journal article" date="2005" name="Nature">
        <title>Sequencing of Aspergillus nidulans and comparative analysis with A. fumigatus and A. oryzae.</title>
        <authorList>
            <person name="Galagan J.E."/>
            <person name="Calvo S.E."/>
            <person name="Cuomo C."/>
            <person name="Ma L.-J."/>
            <person name="Wortman J.R."/>
            <person name="Batzoglou S."/>
            <person name="Lee S.-I."/>
            <person name="Bastuerkmen M."/>
            <person name="Spevak C.C."/>
            <person name="Clutterbuck J."/>
            <person name="Kapitonov V."/>
            <person name="Jurka J."/>
            <person name="Scazzocchio C."/>
            <person name="Farman M.L."/>
            <person name="Butler J."/>
            <person name="Purcell S."/>
            <person name="Harris S."/>
            <person name="Braus G.H."/>
            <person name="Draht O."/>
            <person name="Busch S."/>
            <person name="D'Enfert C."/>
            <person name="Bouchier C."/>
            <person name="Goldman G.H."/>
            <person name="Bell-Pedersen D."/>
            <person name="Griffiths-Jones S."/>
            <person name="Doonan J.H."/>
            <person name="Yu J."/>
            <person name="Vienken K."/>
            <person name="Pain A."/>
            <person name="Freitag M."/>
            <person name="Selker E.U."/>
            <person name="Archer D.B."/>
            <person name="Penalva M.A."/>
            <person name="Oakley B.R."/>
            <person name="Momany M."/>
            <person name="Tanaka T."/>
            <person name="Kumagai T."/>
            <person name="Asai K."/>
            <person name="Machida M."/>
            <person name="Nierman W.C."/>
            <person name="Denning D.W."/>
            <person name="Caddick M.X."/>
            <person name="Hynes M."/>
            <person name="Paoletti M."/>
            <person name="Fischer R."/>
            <person name="Miller B.L."/>
            <person name="Dyer P.S."/>
            <person name="Sachs M.S."/>
            <person name="Osmani S.A."/>
            <person name="Birren B.W."/>
        </authorList>
    </citation>
    <scope>NUCLEOTIDE SEQUENCE [LARGE SCALE GENOMIC DNA]</scope>
    <source>
        <strain>FGSC A4 / ATCC 38163 / CBS 112.46 / NRRL 194 / M139</strain>
    </source>
</reference>
<reference key="2">
    <citation type="journal article" date="2009" name="Fungal Genet. Biol.">
        <title>The 2008 update of the Aspergillus nidulans genome annotation: a community effort.</title>
        <authorList>
            <person name="Wortman J.R."/>
            <person name="Gilsenan J.M."/>
            <person name="Joardar V."/>
            <person name="Deegan J."/>
            <person name="Clutterbuck J."/>
            <person name="Andersen M.R."/>
            <person name="Archer D."/>
            <person name="Bencina M."/>
            <person name="Braus G."/>
            <person name="Coutinho P."/>
            <person name="von Dohren H."/>
            <person name="Doonan J."/>
            <person name="Driessen A.J."/>
            <person name="Durek P."/>
            <person name="Espeso E."/>
            <person name="Fekete E."/>
            <person name="Flipphi M."/>
            <person name="Estrada C.G."/>
            <person name="Geysens S."/>
            <person name="Goldman G."/>
            <person name="de Groot P.W."/>
            <person name="Hansen K."/>
            <person name="Harris S.D."/>
            <person name="Heinekamp T."/>
            <person name="Helmstaedt K."/>
            <person name="Henrissat B."/>
            <person name="Hofmann G."/>
            <person name="Homan T."/>
            <person name="Horio T."/>
            <person name="Horiuchi H."/>
            <person name="James S."/>
            <person name="Jones M."/>
            <person name="Karaffa L."/>
            <person name="Karanyi Z."/>
            <person name="Kato M."/>
            <person name="Keller N."/>
            <person name="Kelly D.E."/>
            <person name="Kiel J.A."/>
            <person name="Kim J.M."/>
            <person name="van der Klei I.J."/>
            <person name="Klis F.M."/>
            <person name="Kovalchuk A."/>
            <person name="Krasevec N."/>
            <person name="Kubicek C.P."/>
            <person name="Liu B."/>
            <person name="Maccabe A."/>
            <person name="Meyer V."/>
            <person name="Mirabito P."/>
            <person name="Miskei M."/>
            <person name="Mos M."/>
            <person name="Mullins J."/>
            <person name="Nelson D.R."/>
            <person name="Nielsen J."/>
            <person name="Oakley B.R."/>
            <person name="Osmani S.A."/>
            <person name="Pakula T."/>
            <person name="Paszewski A."/>
            <person name="Paulsen I."/>
            <person name="Pilsyk S."/>
            <person name="Pocsi I."/>
            <person name="Punt P.J."/>
            <person name="Ram A.F."/>
            <person name="Ren Q."/>
            <person name="Robellet X."/>
            <person name="Robson G."/>
            <person name="Seiboth B."/>
            <person name="van Solingen P."/>
            <person name="Specht T."/>
            <person name="Sun J."/>
            <person name="Taheri-Talesh N."/>
            <person name="Takeshita N."/>
            <person name="Ussery D."/>
            <person name="vanKuyk P.A."/>
            <person name="Visser H."/>
            <person name="van de Vondervoort P.J."/>
            <person name="de Vries R.P."/>
            <person name="Walton J."/>
            <person name="Xiang X."/>
            <person name="Xiong Y."/>
            <person name="Zeng A.P."/>
            <person name="Brandt B.W."/>
            <person name="Cornell M.J."/>
            <person name="van den Hondel C.A."/>
            <person name="Visser J."/>
            <person name="Oliver S.G."/>
            <person name="Turner G."/>
        </authorList>
    </citation>
    <scope>GENOME REANNOTATION</scope>
    <source>
        <strain>FGSC A4 / ATCC 38163 / CBS 112.46 / NRRL 194 / M139</strain>
    </source>
</reference>
<comment type="function">
    <text evidence="1">Pectinolytic enzyme involved in the degradation of xylogalacturonan (xga), a galacturonan backbone heavily substituted with xylose, and which is one important component of the hairy regions of pectin. Activity requires a galacturonic acid backbone substituted with xylose (By similarity).</text>
</comment>
<comment type="subcellular location">
    <subcellularLocation>
        <location evidence="1">Secreted</location>
    </subcellularLocation>
</comment>
<comment type="similarity">
    <text evidence="4">Belongs to the glycosyl hydrolase 28 family.</text>
</comment>
<dbReference type="EC" id="3.2.1.-"/>
<dbReference type="EMBL" id="AACD01000055">
    <property type="protein sequence ID" value="EAA63357.1"/>
    <property type="molecule type" value="Genomic_DNA"/>
</dbReference>
<dbReference type="EMBL" id="BN001306">
    <property type="protein sequence ID" value="CBF82806.1"/>
    <property type="molecule type" value="Genomic_DNA"/>
</dbReference>
<dbReference type="RefSeq" id="XP_660993.1">
    <property type="nucleotide sequence ID" value="XM_655901.1"/>
</dbReference>
<dbReference type="SMR" id="Q5B7U1"/>
<dbReference type="STRING" id="227321.Q5B7U1"/>
<dbReference type="CAZy" id="GH28">
    <property type="family name" value="Glycoside Hydrolase Family 28"/>
</dbReference>
<dbReference type="GlyCosmos" id="Q5B7U1">
    <property type="glycosylation" value="2 sites, No reported glycans"/>
</dbReference>
<dbReference type="EnsemblFungi" id="CBF82806">
    <property type="protein sequence ID" value="CBF82806"/>
    <property type="gene ID" value="ANIA_03389"/>
</dbReference>
<dbReference type="KEGG" id="ani:ANIA_03389"/>
<dbReference type="eggNOG" id="ENOG502QTHU">
    <property type="taxonomic scope" value="Eukaryota"/>
</dbReference>
<dbReference type="HOGENOM" id="CLU_016031_1_3_1"/>
<dbReference type="InParanoid" id="Q5B7U1"/>
<dbReference type="OMA" id="FKPGANY"/>
<dbReference type="OrthoDB" id="187139at2759"/>
<dbReference type="Proteomes" id="UP000000560">
    <property type="component" value="Chromosome VI"/>
</dbReference>
<dbReference type="GO" id="GO:0005576">
    <property type="term" value="C:extracellular region"/>
    <property type="evidence" value="ECO:0007669"/>
    <property type="project" value="UniProtKB-SubCell"/>
</dbReference>
<dbReference type="GO" id="GO:0004650">
    <property type="term" value="F:polygalacturonase activity"/>
    <property type="evidence" value="ECO:0007669"/>
    <property type="project" value="InterPro"/>
</dbReference>
<dbReference type="GO" id="GO:0071555">
    <property type="term" value="P:cell wall organization"/>
    <property type="evidence" value="ECO:0007669"/>
    <property type="project" value="UniProtKB-KW"/>
</dbReference>
<dbReference type="GO" id="GO:0045490">
    <property type="term" value="P:pectin catabolic process"/>
    <property type="evidence" value="ECO:0007669"/>
    <property type="project" value="UniProtKB-ARBA"/>
</dbReference>
<dbReference type="Gene3D" id="2.160.20.10">
    <property type="entry name" value="Single-stranded right-handed beta-helix, Pectin lyase-like"/>
    <property type="match status" value="1"/>
</dbReference>
<dbReference type="InterPro" id="IPR000743">
    <property type="entry name" value="Glyco_hydro_28"/>
</dbReference>
<dbReference type="InterPro" id="IPR006626">
    <property type="entry name" value="PbH1"/>
</dbReference>
<dbReference type="InterPro" id="IPR012334">
    <property type="entry name" value="Pectin_lyas_fold"/>
</dbReference>
<dbReference type="InterPro" id="IPR011050">
    <property type="entry name" value="Pectin_lyase_fold/virulence"/>
</dbReference>
<dbReference type="PANTHER" id="PTHR31736">
    <property type="match status" value="1"/>
</dbReference>
<dbReference type="PANTHER" id="PTHR31736:SF9">
    <property type="entry name" value="ENDO-XYLOGALACTURONAN HYDROLASE A-RELATED"/>
    <property type="match status" value="1"/>
</dbReference>
<dbReference type="Pfam" id="PF00295">
    <property type="entry name" value="Glyco_hydro_28"/>
    <property type="match status" value="1"/>
</dbReference>
<dbReference type="SMART" id="SM00710">
    <property type="entry name" value="PbH1"/>
    <property type="match status" value="5"/>
</dbReference>
<dbReference type="SUPFAM" id="SSF51126">
    <property type="entry name" value="Pectin lyase-like"/>
    <property type="match status" value="1"/>
</dbReference>
<dbReference type="PROSITE" id="PS00502">
    <property type="entry name" value="POLYGALACTURONASE"/>
    <property type="match status" value="1"/>
</dbReference>
<sequence>MTFGKAAFLSFSLFGASWAGPSRTLQARAVCTPKAGGSSSIDDVPAIVKSISACGDGGTIVFPEDSTYYLNSVLDLAGCSGCELQVEGLLKFASDTDYWNGRTAMINVKNIDGLTIRSLTGSGVIDGNGQNAYDRFAEDSSYDRPTPLYITGGGDIKVSNFRLKNAPNVFVSVKGGTTNAVFSDMRLDATSKSENLPKNTDGFDIGESTYVTISGTTVSNNDDCVAFKPGCNYLTVTDITCTGSHGLSVGSLGKSSDDIVQNVRVEGATMISSTKAAGIKTYPSGGDHGLSTVTNVTWKDITIQNCDYAIQIQSCYGEDEEYCETNPGDAVFSGIAFEGFSGTTSSKYDPVTGNLNCGEDGKCDVSVVDYSVKAPSGGAAENLTVTTYKNRCLCQARSV</sequence>
<organism>
    <name type="scientific">Emericella nidulans (strain FGSC A4 / ATCC 38163 / CBS 112.46 / NRRL 194 / M139)</name>
    <name type="common">Aspergillus nidulans</name>
    <dbReference type="NCBI Taxonomy" id="227321"/>
    <lineage>
        <taxon>Eukaryota</taxon>
        <taxon>Fungi</taxon>
        <taxon>Dikarya</taxon>
        <taxon>Ascomycota</taxon>
        <taxon>Pezizomycotina</taxon>
        <taxon>Eurotiomycetes</taxon>
        <taxon>Eurotiomycetidae</taxon>
        <taxon>Eurotiales</taxon>
        <taxon>Aspergillaceae</taxon>
        <taxon>Aspergillus</taxon>
        <taxon>Aspergillus subgen. Nidulantes</taxon>
    </lineage>
</organism>
<evidence type="ECO:0000250" key="1"/>
<evidence type="ECO:0000255" key="2"/>
<evidence type="ECO:0000255" key="3">
    <source>
        <dbReference type="PROSITE-ProRule" id="PRU10052"/>
    </source>
</evidence>
<evidence type="ECO:0000305" key="4"/>